<evidence type="ECO:0000255" key="1">
    <source>
        <dbReference type="HAMAP-Rule" id="MF_00254"/>
    </source>
</evidence>
<name>SYGA_FRATW</name>
<proteinExistence type="inferred from homology"/>
<reference key="1">
    <citation type="journal article" date="2007" name="PLoS ONE">
        <title>Complete genomic characterization of a pathogenic A.II strain of Francisella tularensis subspecies tularensis.</title>
        <authorList>
            <person name="Beckstrom-Sternberg S.M."/>
            <person name="Auerbach R.K."/>
            <person name="Godbole S."/>
            <person name="Pearson J.V."/>
            <person name="Beckstrom-Sternberg J.S."/>
            <person name="Deng Z."/>
            <person name="Munk C."/>
            <person name="Kubota K."/>
            <person name="Zhou Y."/>
            <person name="Bruce D."/>
            <person name="Noronha J."/>
            <person name="Scheuermann R.H."/>
            <person name="Wang A."/>
            <person name="Wei X."/>
            <person name="Wang J."/>
            <person name="Hao J."/>
            <person name="Wagner D.M."/>
            <person name="Brettin T.S."/>
            <person name="Brown N."/>
            <person name="Gilna P."/>
            <person name="Keim P.S."/>
        </authorList>
    </citation>
    <scope>NUCLEOTIDE SEQUENCE [LARGE SCALE GENOMIC DNA]</scope>
    <source>
        <strain>WY96-3418</strain>
    </source>
</reference>
<accession>A4IZJ6</accession>
<dbReference type="EC" id="6.1.1.14" evidence="1"/>
<dbReference type="EMBL" id="CP000608">
    <property type="protein sequence ID" value="ABO47346.1"/>
    <property type="molecule type" value="Genomic_DNA"/>
</dbReference>
<dbReference type="RefSeq" id="WP_003027043.1">
    <property type="nucleotide sequence ID" value="NC_009257.1"/>
</dbReference>
<dbReference type="SMR" id="A4IZJ6"/>
<dbReference type="KEGG" id="ftw:FTW_1654"/>
<dbReference type="HOGENOM" id="CLU_057066_1_0_6"/>
<dbReference type="GO" id="GO:0005829">
    <property type="term" value="C:cytosol"/>
    <property type="evidence" value="ECO:0007669"/>
    <property type="project" value="TreeGrafter"/>
</dbReference>
<dbReference type="GO" id="GO:0005524">
    <property type="term" value="F:ATP binding"/>
    <property type="evidence" value="ECO:0007669"/>
    <property type="project" value="UniProtKB-UniRule"/>
</dbReference>
<dbReference type="GO" id="GO:0004820">
    <property type="term" value="F:glycine-tRNA ligase activity"/>
    <property type="evidence" value="ECO:0007669"/>
    <property type="project" value="UniProtKB-UniRule"/>
</dbReference>
<dbReference type="GO" id="GO:0006426">
    <property type="term" value="P:glycyl-tRNA aminoacylation"/>
    <property type="evidence" value="ECO:0007669"/>
    <property type="project" value="UniProtKB-UniRule"/>
</dbReference>
<dbReference type="CDD" id="cd00733">
    <property type="entry name" value="GlyRS_alpha_core"/>
    <property type="match status" value="1"/>
</dbReference>
<dbReference type="FunFam" id="3.30.930.10:FF:000006">
    <property type="entry name" value="Glycine--tRNA ligase alpha subunit"/>
    <property type="match status" value="1"/>
</dbReference>
<dbReference type="Gene3D" id="3.30.930.10">
    <property type="entry name" value="Bira Bifunctional Protein, Domain 2"/>
    <property type="match status" value="1"/>
</dbReference>
<dbReference type="Gene3D" id="1.20.58.180">
    <property type="entry name" value="Class II aaRS and biotin synthetases, domain 2"/>
    <property type="match status" value="1"/>
</dbReference>
<dbReference type="HAMAP" id="MF_00254">
    <property type="entry name" value="Gly_tRNA_synth_alpha"/>
    <property type="match status" value="1"/>
</dbReference>
<dbReference type="InterPro" id="IPR045864">
    <property type="entry name" value="aa-tRNA-synth_II/BPL/LPL"/>
</dbReference>
<dbReference type="InterPro" id="IPR006194">
    <property type="entry name" value="Gly-tRNA-synth_heterodimer"/>
</dbReference>
<dbReference type="InterPro" id="IPR002310">
    <property type="entry name" value="Gly-tRNA_ligase_asu"/>
</dbReference>
<dbReference type="NCBIfam" id="TIGR00388">
    <property type="entry name" value="glyQ"/>
    <property type="match status" value="1"/>
</dbReference>
<dbReference type="NCBIfam" id="NF006827">
    <property type="entry name" value="PRK09348.1"/>
    <property type="match status" value="1"/>
</dbReference>
<dbReference type="PANTHER" id="PTHR30075:SF2">
    <property type="entry name" value="GLYCINE--TRNA LIGASE, CHLOROPLASTIC_MITOCHONDRIAL 2"/>
    <property type="match status" value="1"/>
</dbReference>
<dbReference type="PANTHER" id="PTHR30075">
    <property type="entry name" value="GLYCYL-TRNA SYNTHETASE"/>
    <property type="match status" value="1"/>
</dbReference>
<dbReference type="Pfam" id="PF02091">
    <property type="entry name" value="tRNA-synt_2e"/>
    <property type="match status" value="1"/>
</dbReference>
<dbReference type="PRINTS" id="PR01044">
    <property type="entry name" value="TRNASYNTHGA"/>
</dbReference>
<dbReference type="SUPFAM" id="SSF55681">
    <property type="entry name" value="Class II aaRS and biotin synthetases"/>
    <property type="match status" value="1"/>
</dbReference>
<dbReference type="PROSITE" id="PS50861">
    <property type="entry name" value="AA_TRNA_LIGASE_II_GLYAB"/>
    <property type="match status" value="1"/>
</dbReference>
<sequence>MLTFQEIILKLHHYWASKGCAIVQPLDMEVGAGTFHPATTLRAIGPEPWTAAYVQPSRRPTDGRYGENPNRTQHYYQYQVVMKPSPDDIQELYLGSLRELGIDPLENDIRFVEDNWESPTLGAWGLGWEVWSNGMEITQFTYFQQVGGLECKPVMGEITYGLERLAMYIQNVDSMYDILWANTQNGPLYYRDVFLQNEVEMSTYNFEEANVEELFKQFDLLEKEGYRLVEKNLPIPAYEFVLKASHTFNLLDARHAISVTERQGYILRVRKLALEVAKEYYSAREKSGFPAFKKDN</sequence>
<gene>
    <name evidence="1" type="primary">glyQ</name>
    <name type="ordered locus">FTW_1654</name>
</gene>
<organism>
    <name type="scientific">Francisella tularensis subsp. tularensis (strain WY96-3418)</name>
    <dbReference type="NCBI Taxonomy" id="418136"/>
    <lineage>
        <taxon>Bacteria</taxon>
        <taxon>Pseudomonadati</taxon>
        <taxon>Pseudomonadota</taxon>
        <taxon>Gammaproteobacteria</taxon>
        <taxon>Thiotrichales</taxon>
        <taxon>Francisellaceae</taxon>
        <taxon>Francisella</taxon>
    </lineage>
</organism>
<comment type="catalytic activity">
    <reaction evidence="1">
        <text>tRNA(Gly) + glycine + ATP = glycyl-tRNA(Gly) + AMP + diphosphate</text>
        <dbReference type="Rhea" id="RHEA:16013"/>
        <dbReference type="Rhea" id="RHEA-COMP:9664"/>
        <dbReference type="Rhea" id="RHEA-COMP:9683"/>
        <dbReference type="ChEBI" id="CHEBI:30616"/>
        <dbReference type="ChEBI" id="CHEBI:33019"/>
        <dbReference type="ChEBI" id="CHEBI:57305"/>
        <dbReference type="ChEBI" id="CHEBI:78442"/>
        <dbReference type="ChEBI" id="CHEBI:78522"/>
        <dbReference type="ChEBI" id="CHEBI:456215"/>
        <dbReference type="EC" id="6.1.1.14"/>
    </reaction>
</comment>
<comment type="subunit">
    <text evidence="1">Tetramer of two alpha and two beta subunits.</text>
</comment>
<comment type="subcellular location">
    <subcellularLocation>
        <location evidence="1">Cytoplasm</location>
    </subcellularLocation>
</comment>
<comment type="similarity">
    <text evidence="1">Belongs to the class-II aminoacyl-tRNA synthetase family.</text>
</comment>
<protein>
    <recommendedName>
        <fullName evidence="1">Glycine--tRNA ligase alpha subunit</fullName>
        <ecNumber evidence="1">6.1.1.14</ecNumber>
    </recommendedName>
    <alternativeName>
        <fullName evidence="1">Glycyl-tRNA synthetase alpha subunit</fullName>
        <shortName evidence="1">GlyRS</shortName>
    </alternativeName>
</protein>
<feature type="chain" id="PRO_1000101195" description="Glycine--tRNA ligase alpha subunit">
    <location>
        <begin position="1"/>
        <end position="296"/>
    </location>
</feature>
<keyword id="KW-0030">Aminoacyl-tRNA synthetase</keyword>
<keyword id="KW-0067">ATP-binding</keyword>
<keyword id="KW-0963">Cytoplasm</keyword>
<keyword id="KW-0436">Ligase</keyword>
<keyword id="KW-0547">Nucleotide-binding</keyword>
<keyword id="KW-0648">Protein biosynthesis</keyword>